<reference key="1">
    <citation type="journal article" date="2008" name="Genome Res.">
        <title>Comparative genome analysis of Salmonella enteritidis PT4 and Salmonella gallinarum 287/91 provides insights into evolutionary and host adaptation pathways.</title>
        <authorList>
            <person name="Thomson N.R."/>
            <person name="Clayton D.J."/>
            <person name="Windhorst D."/>
            <person name="Vernikos G."/>
            <person name="Davidson S."/>
            <person name="Churcher C."/>
            <person name="Quail M.A."/>
            <person name="Stevens M."/>
            <person name="Jones M.A."/>
            <person name="Watson M."/>
            <person name="Barron A."/>
            <person name="Layton A."/>
            <person name="Pickard D."/>
            <person name="Kingsley R.A."/>
            <person name="Bignell A."/>
            <person name="Clark L."/>
            <person name="Harris B."/>
            <person name="Ormond D."/>
            <person name="Abdellah Z."/>
            <person name="Brooks K."/>
            <person name="Cherevach I."/>
            <person name="Chillingworth T."/>
            <person name="Woodward J."/>
            <person name="Norberczak H."/>
            <person name="Lord A."/>
            <person name="Arrowsmith C."/>
            <person name="Jagels K."/>
            <person name="Moule S."/>
            <person name="Mungall K."/>
            <person name="Saunders M."/>
            <person name="Whitehead S."/>
            <person name="Chabalgoity J.A."/>
            <person name="Maskell D."/>
            <person name="Humphreys T."/>
            <person name="Roberts M."/>
            <person name="Barrow P.A."/>
            <person name="Dougan G."/>
            <person name="Parkhill J."/>
        </authorList>
    </citation>
    <scope>NUCLEOTIDE SEQUENCE [LARGE SCALE GENOMIC DNA]</scope>
    <source>
        <strain>P125109</strain>
    </source>
</reference>
<accession>B5R0A0</accession>
<name>DSRB_SALEP</name>
<organism>
    <name type="scientific">Salmonella enteritidis PT4 (strain P125109)</name>
    <dbReference type="NCBI Taxonomy" id="550537"/>
    <lineage>
        <taxon>Bacteria</taxon>
        <taxon>Pseudomonadati</taxon>
        <taxon>Pseudomonadota</taxon>
        <taxon>Gammaproteobacteria</taxon>
        <taxon>Enterobacterales</taxon>
        <taxon>Enterobacteriaceae</taxon>
        <taxon>Salmonella</taxon>
    </lineage>
</organism>
<sequence>MKVNDRVTVKTDGGPRRPGVVLAVEEFSEGTMYLVSLEDYPLGIWFFNESGHQDGIFVEKAEQD</sequence>
<feature type="chain" id="PRO_1000146856" description="Protein DsrB">
    <location>
        <begin position="1"/>
        <end position="64"/>
    </location>
</feature>
<evidence type="ECO:0000255" key="1">
    <source>
        <dbReference type="HAMAP-Rule" id="MF_01549"/>
    </source>
</evidence>
<proteinExistence type="inferred from homology"/>
<protein>
    <recommendedName>
        <fullName evidence="1">Protein DsrB</fullName>
    </recommendedName>
</protein>
<dbReference type="EMBL" id="AM933172">
    <property type="protein sequence ID" value="CAR32610.1"/>
    <property type="molecule type" value="Genomic_DNA"/>
</dbReference>
<dbReference type="RefSeq" id="WP_000867218.1">
    <property type="nucleotide sequence ID" value="NC_011294.1"/>
</dbReference>
<dbReference type="SMR" id="B5R0A0"/>
<dbReference type="KEGG" id="set:SEN1026"/>
<dbReference type="HOGENOM" id="CLU_189289_0_0_6"/>
<dbReference type="Proteomes" id="UP000000613">
    <property type="component" value="Chromosome"/>
</dbReference>
<dbReference type="HAMAP" id="MF_01549">
    <property type="entry name" value="DsrB"/>
    <property type="match status" value="1"/>
</dbReference>
<dbReference type="InterPro" id="IPR019717">
    <property type="entry name" value="Dextransucrase_DSRB"/>
</dbReference>
<dbReference type="NCBIfam" id="NF007981">
    <property type="entry name" value="PRK10708.1"/>
    <property type="match status" value="1"/>
</dbReference>
<dbReference type="Pfam" id="PF10781">
    <property type="entry name" value="DSRB"/>
    <property type="match status" value="1"/>
</dbReference>
<gene>
    <name evidence="1" type="primary">dsrB</name>
    <name type="ordered locus">SEN1026</name>
</gene>
<comment type="similarity">
    <text evidence="1">Belongs to the DsrB family.</text>
</comment>